<feature type="chain" id="PRO_0000058400" description="Ribose 1,5-bisphosphate phosphokinase PhnN">
    <location>
        <begin position="1"/>
        <end position="185"/>
    </location>
</feature>
<feature type="binding site" evidence="1">
    <location>
        <begin position="10"/>
        <end position="17"/>
    </location>
    <ligand>
        <name>ATP</name>
        <dbReference type="ChEBI" id="CHEBI:30616"/>
    </ligand>
</feature>
<organism>
    <name type="scientific">Escherichia coli (strain K12)</name>
    <dbReference type="NCBI Taxonomy" id="83333"/>
    <lineage>
        <taxon>Bacteria</taxon>
        <taxon>Pseudomonadati</taxon>
        <taxon>Pseudomonadota</taxon>
        <taxon>Gammaproteobacteria</taxon>
        <taxon>Enterobacterales</taxon>
        <taxon>Enterobacteriaceae</taxon>
        <taxon>Escherichia</taxon>
    </lineage>
</organism>
<comment type="function">
    <text evidence="2 3">Catalyzes the phosphorylation of ribose 1,5-bisphosphate to 5-phospho-D-ribosyl alpha-1-diphosphate (PRPP). Accepts ATP but not GTP as a phosphoryl donor, and uses ribose 1,5-bisphosphate but not ribose, ribose 1-phosphate, or ribose 5-phosphate as a phosphoryl acceptor.</text>
</comment>
<comment type="catalytic activity">
    <reaction evidence="2">
        <text>alpha-D-ribose 1,5-bisphosphate + ATP = 5-phospho-alpha-D-ribose 1-diphosphate + ADP</text>
        <dbReference type="Rhea" id="RHEA:20109"/>
        <dbReference type="ChEBI" id="CHEBI:30616"/>
        <dbReference type="ChEBI" id="CHEBI:58017"/>
        <dbReference type="ChEBI" id="CHEBI:68688"/>
        <dbReference type="ChEBI" id="CHEBI:456216"/>
        <dbReference type="EC" id="2.7.4.23"/>
    </reaction>
</comment>
<comment type="pathway">
    <text>Metabolic intermediate biosynthesis; 5-phospho-alpha-D-ribose 1-diphosphate biosynthesis; 5-phospho-alpha-D-ribose 1-diphosphate from D-ribose 5-phosphate (route II): step 3/3.</text>
</comment>
<comment type="similarity">
    <text evidence="4">Belongs to the ribose 1,5-bisphosphokinase family.</text>
</comment>
<sequence length="185" mass="20730">MMGKLIWLMGPSGSGKDSLLAELRLREQTQLLVAHRYITRDASAGSENHIALSEQEFFTRAGQNLLALSWHANGLYYGVGVEIDLWLHAGFDVLVNGSRAHLPQARARYQSALLPVCLQVSPEILRQRLENRGRENASEINARLARAARYTPQDCHTLNNDGSLRQSVDTLLTLIHQKEKHHACL</sequence>
<reference key="1">
    <citation type="journal article" date="1990" name="J. Biol. Chem.">
        <title>Molecular biology of carbon-phosphorus bond cleavage. Cloning and sequencing of the phn (psiD) genes involved in alkylphosphonate uptake and C-P lyase activity in Escherichia coli B.</title>
        <authorList>
            <person name="Chen C.-M."/>
            <person name="Ye Q.-Z."/>
            <person name="Zhu Z."/>
            <person name="Wanner B.L."/>
            <person name="Walsh C.T."/>
        </authorList>
    </citation>
    <scope>NUCLEOTIDE SEQUENCE [GENOMIC DNA]</scope>
    <source>
        <strain>B</strain>
    </source>
</reference>
<reference key="2">
    <citation type="journal article" date="1991" name="J. Bacteriol.">
        <title>Molecular analysis of the cryptic and functional phn operons for phosphonate use in Escherichia coli K-12.</title>
        <authorList>
            <person name="Makino K."/>
            <person name="Kim S.K."/>
            <person name="Shinagawa H."/>
            <person name="Amemura M."/>
            <person name="Nakata A."/>
        </authorList>
    </citation>
    <scope>NUCLEOTIDE SEQUENCE [GENOMIC DNA]</scope>
    <source>
        <strain>K12</strain>
    </source>
</reference>
<reference key="3">
    <citation type="journal article" date="1995" name="Nucleic Acids Res.">
        <title>Analysis of the Escherichia coli genome VI: DNA sequence of the region from 92.8 through 100 minutes.</title>
        <authorList>
            <person name="Burland V.D."/>
            <person name="Plunkett G. III"/>
            <person name="Sofia H.J."/>
            <person name="Daniels D.L."/>
            <person name="Blattner F.R."/>
        </authorList>
    </citation>
    <scope>NUCLEOTIDE SEQUENCE [LARGE SCALE GENOMIC DNA]</scope>
    <source>
        <strain>K12 / MG1655 / ATCC 47076</strain>
    </source>
</reference>
<reference key="4">
    <citation type="journal article" date="1997" name="Science">
        <title>The complete genome sequence of Escherichia coli K-12.</title>
        <authorList>
            <person name="Blattner F.R."/>
            <person name="Plunkett G. III"/>
            <person name="Bloch C.A."/>
            <person name="Perna N.T."/>
            <person name="Burland V."/>
            <person name="Riley M."/>
            <person name="Collado-Vides J."/>
            <person name="Glasner J.D."/>
            <person name="Rode C.K."/>
            <person name="Mayhew G.F."/>
            <person name="Gregor J."/>
            <person name="Davis N.W."/>
            <person name="Kirkpatrick H.A."/>
            <person name="Goeden M.A."/>
            <person name="Rose D.J."/>
            <person name="Mau B."/>
            <person name="Shao Y."/>
        </authorList>
    </citation>
    <scope>NUCLEOTIDE SEQUENCE [LARGE SCALE GENOMIC DNA]</scope>
    <source>
        <strain>K12 / MG1655 / ATCC 47076</strain>
    </source>
</reference>
<reference key="5">
    <citation type="journal article" date="2006" name="Mol. Syst. Biol.">
        <title>Highly accurate genome sequences of Escherichia coli K-12 strains MG1655 and W3110.</title>
        <authorList>
            <person name="Hayashi K."/>
            <person name="Morooka N."/>
            <person name="Yamamoto Y."/>
            <person name="Fujita K."/>
            <person name="Isono K."/>
            <person name="Choi S."/>
            <person name="Ohtsubo E."/>
            <person name="Baba T."/>
            <person name="Wanner B.L."/>
            <person name="Mori H."/>
            <person name="Horiuchi T."/>
        </authorList>
    </citation>
    <scope>NUCLEOTIDE SEQUENCE [LARGE SCALE GENOMIC DNA]</scope>
    <source>
        <strain>K12 / W3110 / ATCC 27325 / DSM 5911</strain>
    </source>
</reference>
<reference key="6">
    <citation type="journal article" date="2003" name="J. Bacteriol.">
        <title>Escherichia coli phnN, encoding ribose 1,5-bisphosphokinase activity (phosphoribosyl diphosphate forming): dual role in phosphonate degradation and NAD biosynthesis pathways.</title>
        <authorList>
            <person name="Hove-Jensen B."/>
            <person name="Rosenkrantz T.J."/>
            <person name="Haldimann A."/>
            <person name="Wanner B.L."/>
        </authorList>
    </citation>
    <scope>FUNCTION AS A RIBOSE 1,5-BISPHOSPHOKINASE</scope>
    <scope>CATALYTIC ACTIVITY</scope>
    <scope>SUBSTRATE SPECIFICITY</scope>
</reference>
<reference key="7">
    <citation type="journal article" date="2009" name="Bioorg. Med. Chem. Lett.">
        <title>A fluorescent substrate for carbon-phosphorus lyase: towards the pathway for organophosphonate metabolism in bacteria.</title>
        <authorList>
            <person name="He S.M."/>
            <person name="Luo Y."/>
            <person name="Hove-Jensen B."/>
            <person name="Zechel D.L."/>
        </authorList>
    </citation>
    <scope>FUNCTION IN THE ORGANOPHOSPHONATE METABOLISM</scope>
</reference>
<reference key="8">
    <citation type="journal article" date="2010" name="J. Bacteriol.">
        <title>Accumulation of intermediates of the carbon-phosphorus lyase pathway for phosphonate degradation in phn mutants of Escherichia coli.</title>
        <authorList>
            <person name="Hove-Jensen B."/>
            <person name="Rosenkrantz T.J."/>
            <person name="Zechel D.L."/>
            <person name="Willemoes M."/>
        </authorList>
    </citation>
    <scope>SUBSTRATE SPECIFICITY</scope>
</reference>
<proteinExistence type="evidence at protein level"/>
<evidence type="ECO:0000250" key="1"/>
<evidence type="ECO:0000269" key="2">
    <source>
    </source>
</evidence>
<evidence type="ECO:0000269" key="3">
    <source>
    </source>
</evidence>
<evidence type="ECO:0000305" key="4"/>
<dbReference type="EC" id="2.7.4.23"/>
<dbReference type="EMBL" id="J05260">
    <property type="protein sequence ID" value="AAA24353.1"/>
    <property type="molecule type" value="Genomic_DNA"/>
</dbReference>
<dbReference type="EMBL" id="D90227">
    <property type="protein sequence ID" value="BAA14274.1"/>
    <property type="molecule type" value="Genomic_DNA"/>
</dbReference>
<dbReference type="EMBL" id="U14003">
    <property type="protein sequence ID" value="AAA96993.1"/>
    <property type="molecule type" value="Genomic_DNA"/>
</dbReference>
<dbReference type="EMBL" id="U00096">
    <property type="protein sequence ID" value="AAC77055.1"/>
    <property type="molecule type" value="Genomic_DNA"/>
</dbReference>
<dbReference type="EMBL" id="AP009048">
    <property type="protein sequence ID" value="BAE78097.1"/>
    <property type="molecule type" value="Genomic_DNA"/>
</dbReference>
<dbReference type="PIR" id="F35719">
    <property type="entry name" value="F35719"/>
</dbReference>
<dbReference type="RefSeq" id="NP_418518.1">
    <property type="nucleotide sequence ID" value="NC_000913.3"/>
</dbReference>
<dbReference type="RefSeq" id="WP_000971886.1">
    <property type="nucleotide sequence ID" value="NZ_SSZK01000016.1"/>
</dbReference>
<dbReference type="SMR" id="P16690"/>
<dbReference type="BioGRID" id="4262022">
    <property type="interactions" value="36"/>
</dbReference>
<dbReference type="FunCoup" id="P16690">
    <property type="interactions" value="231"/>
</dbReference>
<dbReference type="IntAct" id="P16690">
    <property type="interactions" value="33"/>
</dbReference>
<dbReference type="STRING" id="511145.b4094"/>
<dbReference type="PaxDb" id="511145-b4094"/>
<dbReference type="EnsemblBacteria" id="AAC77055">
    <property type="protein sequence ID" value="AAC77055"/>
    <property type="gene ID" value="b4094"/>
</dbReference>
<dbReference type="GeneID" id="93777740"/>
<dbReference type="GeneID" id="948608"/>
<dbReference type="KEGG" id="ecj:JW4055"/>
<dbReference type="KEGG" id="eco:b4094"/>
<dbReference type="KEGG" id="ecoc:C3026_22130"/>
<dbReference type="PATRIC" id="fig|1411691.4.peg.2606"/>
<dbReference type="EchoBASE" id="EB0717"/>
<dbReference type="eggNOG" id="COG3709">
    <property type="taxonomic scope" value="Bacteria"/>
</dbReference>
<dbReference type="HOGENOM" id="CLU_102477_0_0_6"/>
<dbReference type="InParanoid" id="P16690"/>
<dbReference type="OMA" id="RLIWLTG"/>
<dbReference type="OrthoDB" id="341217at2"/>
<dbReference type="PhylomeDB" id="P16690"/>
<dbReference type="BioCyc" id="EcoCyc:EG10723-MONOMER"/>
<dbReference type="BioCyc" id="MetaCyc:EG10723-MONOMER"/>
<dbReference type="BRENDA" id="2.7.4.23">
    <property type="organism ID" value="2026"/>
</dbReference>
<dbReference type="UniPathway" id="UPA00087">
    <property type="reaction ID" value="UER00175"/>
</dbReference>
<dbReference type="PRO" id="PR:P16690"/>
<dbReference type="Proteomes" id="UP000000625">
    <property type="component" value="Chromosome"/>
</dbReference>
<dbReference type="GO" id="GO:0005829">
    <property type="term" value="C:cytosol"/>
    <property type="evidence" value="ECO:0000318"/>
    <property type="project" value="GO_Central"/>
</dbReference>
<dbReference type="GO" id="GO:0005524">
    <property type="term" value="F:ATP binding"/>
    <property type="evidence" value="ECO:0007669"/>
    <property type="project" value="UniProtKB-KW"/>
</dbReference>
<dbReference type="GO" id="GO:0033863">
    <property type="term" value="F:ribose 1,5-bisphosphate phosphokinase activity"/>
    <property type="evidence" value="ECO:0000314"/>
    <property type="project" value="UniProtKB"/>
</dbReference>
<dbReference type="GO" id="GO:0006015">
    <property type="term" value="P:5-phosphoribose 1-diphosphate biosynthetic process"/>
    <property type="evidence" value="ECO:0000314"/>
    <property type="project" value="UniProtKB"/>
</dbReference>
<dbReference type="GO" id="GO:0009435">
    <property type="term" value="P:NAD biosynthetic process"/>
    <property type="evidence" value="ECO:0000269"/>
    <property type="project" value="EcoCyc"/>
</dbReference>
<dbReference type="GO" id="GO:0019634">
    <property type="term" value="P:organic phosphonate metabolic process"/>
    <property type="evidence" value="ECO:0000314"/>
    <property type="project" value="UniProtKB"/>
</dbReference>
<dbReference type="FunFam" id="3.40.50.300:FF:000979">
    <property type="entry name" value="Ribose 1,5-bisphosphate phosphokinase PhnN"/>
    <property type="match status" value="1"/>
</dbReference>
<dbReference type="Gene3D" id="3.40.50.300">
    <property type="entry name" value="P-loop containing nucleotide triphosphate hydrolases"/>
    <property type="match status" value="1"/>
</dbReference>
<dbReference type="HAMAP" id="MF_00836">
    <property type="entry name" value="PhnN"/>
    <property type="match status" value="1"/>
</dbReference>
<dbReference type="InterPro" id="IPR008145">
    <property type="entry name" value="GK/Ca_channel_bsu"/>
</dbReference>
<dbReference type="InterPro" id="IPR027417">
    <property type="entry name" value="P-loop_NTPase"/>
</dbReference>
<dbReference type="InterPro" id="IPR012699">
    <property type="entry name" value="PhnN"/>
</dbReference>
<dbReference type="NCBIfam" id="TIGR02322">
    <property type="entry name" value="phosphon_PhnN"/>
    <property type="match status" value="1"/>
</dbReference>
<dbReference type="NCBIfam" id="NF007485">
    <property type="entry name" value="PRK10078.1"/>
    <property type="match status" value="1"/>
</dbReference>
<dbReference type="Pfam" id="PF13238">
    <property type="entry name" value="AAA_18"/>
    <property type="match status" value="1"/>
</dbReference>
<dbReference type="SMART" id="SM00072">
    <property type="entry name" value="GuKc"/>
    <property type="match status" value="1"/>
</dbReference>
<dbReference type="SUPFAM" id="SSF52540">
    <property type="entry name" value="P-loop containing nucleoside triphosphate hydrolases"/>
    <property type="match status" value="1"/>
</dbReference>
<protein>
    <recommendedName>
        <fullName>Ribose 1,5-bisphosphate phosphokinase PhnN</fullName>
        <ecNumber>2.7.4.23</ecNumber>
    </recommendedName>
    <alternativeName>
        <fullName>Ribose 1,5-bisphosphokinase</fullName>
    </alternativeName>
</protein>
<accession>P16690</accession>
<accession>Q2M6K9</accession>
<keyword id="KW-0067">ATP-binding</keyword>
<keyword id="KW-0547">Nucleotide-binding</keyword>
<keyword id="KW-1185">Reference proteome</keyword>
<keyword id="KW-0808">Transferase</keyword>
<gene>
    <name type="primary">phnN</name>
    <name type="ordered locus">b4094</name>
    <name type="ordered locus">JW4055</name>
</gene>
<name>PHNN_ECOLI</name>